<gene>
    <name evidence="1" type="primary">rsmG</name>
    <name type="ordered locus">Cbei_5097</name>
</gene>
<dbReference type="EC" id="2.1.1.-" evidence="1"/>
<dbReference type="EMBL" id="CP000721">
    <property type="protein sequence ID" value="ABR37203.1"/>
    <property type="molecule type" value="Genomic_DNA"/>
</dbReference>
<dbReference type="RefSeq" id="WP_012061246.1">
    <property type="nucleotide sequence ID" value="NC_009617.1"/>
</dbReference>
<dbReference type="SMR" id="A6M3M3"/>
<dbReference type="KEGG" id="cbe:Cbei_5097"/>
<dbReference type="eggNOG" id="COG0357">
    <property type="taxonomic scope" value="Bacteria"/>
</dbReference>
<dbReference type="HOGENOM" id="CLU_065341_0_0_9"/>
<dbReference type="Proteomes" id="UP000000565">
    <property type="component" value="Chromosome"/>
</dbReference>
<dbReference type="GO" id="GO:0005829">
    <property type="term" value="C:cytosol"/>
    <property type="evidence" value="ECO:0007669"/>
    <property type="project" value="TreeGrafter"/>
</dbReference>
<dbReference type="GO" id="GO:0070043">
    <property type="term" value="F:rRNA (guanine-N7-)-methyltransferase activity"/>
    <property type="evidence" value="ECO:0007669"/>
    <property type="project" value="UniProtKB-UniRule"/>
</dbReference>
<dbReference type="CDD" id="cd02440">
    <property type="entry name" value="AdoMet_MTases"/>
    <property type="match status" value="1"/>
</dbReference>
<dbReference type="FunFam" id="3.40.50.150:FF:000041">
    <property type="entry name" value="Ribosomal RNA small subunit methyltransferase G"/>
    <property type="match status" value="1"/>
</dbReference>
<dbReference type="Gene3D" id="3.40.50.150">
    <property type="entry name" value="Vaccinia Virus protein VP39"/>
    <property type="match status" value="1"/>
</dbReference>
<dbReference type="HAMAP" id="MF_00074">
    <property type="entry name" value="16SrRNA_methyltr_G"/>
    <property type="match status" value="1"/>
</dbReference>
<dbReference type="InterPro" id="IPR003682">
    <property type="entry name" value="rRNA_ssu_MeTfrase_G"/>
</dbReference>
<dbReference type="InterPro" id="IPR029063">
    <property type="entry name" value="SAM-dependent_MTases_sf"/>
</dbReference>
<dbReference type="NCBIfam" id="TIGR00138">
    <property type="entry name" value="rsmG_gidB"/>
    <property type="match status" value="1"/>
</dbReference>
<dbReference type="PANTHER" id="PTHR31760">
    <property type="entry name" value="S-ADENOSYL-L-METHIONINE-DEPENDENT METHYLTRANSFERASES SUPERFAMILY PROTEIN"/>
    <property type="match status" value="1"/>
</dbReference>
<dbReference type="PANTHER" id="PTHR31760:SF0">
    <property type="entry name" value="S-ADENOSYL-L-METHIONINE-DEPENDENT METHYLTRANSFERASES SUPERFAMILY PROTEIN"/>
    <property type="match status" value="1"/>
</dbReference>
<dbReference type="Pfam" id="PF02527">
    <property type="entry name" value="GidB"/>
    <property type="match status" value="1"/>
</dbReference>
<dbReference type="PIRSF" id="PIRSF003078">
    <property type="entry name" value="GidB"/>
    <property type="match status" value="1"/>
</dbReference>
<dbReference type="SUPFAM" id="SSF53335">
    <property type="entry name" value="S-adenosyl-L-methionine-dependent methyltransferases"/>
    <property type="match status" value="1"/>
</dbReference>
<name>RSMG_CLOB8</name>
<protein>
    <recommendedName>
        <fullName evidence="1">Ribosomal RNA small subunit methyltransferase G</fullName>
        <ecNumber evidence="1">2.1.1.-</ecNumber>
    </recommendedName>
    <alternativeName>
        <fullName evidence="1">16S rRNA 7-methylguanosine methyltransferase</fullName>
        <shortName evidence="1">16S rRNA m7G methyltransferase</shortName>
    </alternativeName>
</protein>
<reference key="1">
    <citation type="submission" date="2007-06" db="EMBL/GenBank/DDBJ databases">
        <title>Complete sequence of Clostridium beijerinckii NCIMB 8052.</title>
        <authorList>
            <consortium name="US DOE Joint Genome Institute"/>
            <person name="Copeland A."/>
            <person name="Lucas S."/>
            <person name="Lapidus A."/>
            <person name="Barry K."/>
            <person name="Detter J.C."/>
            <person name="Glavina del Rio T."/>
            <person name="Hammon N."/>
            <person name="Israni S."/>
            <person name="Dalin E."/>
            <person name="Tice H."/>
            <person name="Pitluck S."/>
            <person name="Sims D."/>
            <person name="Brettin T."/>
            <person name="Bruce D."/>
            <person name="Tapia R."/>
            <person name="Brainard J."/>
            <person name="Schmutz J."/>
            <person name="Larimer F."/>
            <person name="Land M."/>
            <person name="Hauser L."/>
            <person name="Kyrpides N."/>
            <person name="Mikhailova N."/>
            <person name="Bennet G."/>
            <person name="Cann I."/>
            <person name="Chen J.-S."/>
            <person name="Contreras A.L."/>
            <person name="Jones D."/>
            <person name="Kashket E."/>
            <person name="Mitchell W."/>
            <person name="Stoddard S."/>
            <person name="Schwarz W."/>
            <person name="Qureshi N."/>
            <person name="Young M."/>
            <person name="Shi Z."/>
            <person name="Ezeji T."/>
            <person name="White B."/>
            <person name="Blaschek H."/>
            <person name="Richardson P."/>
        </authorList>
    </citation>
    <scope>NUCLEOTIDE SEQUENCE [LARGE SCALE GENOMIC DNA]</scope>
    <source>
        <strain>ATCC 51743 / NCIMB 8052</strain>
    </source>
</reference>
<evidence type="ECO:0000255" key="1">
    <source>
        <dbReference type="HAMAP-Rule" id="MF_00074"/>
    </source>
</evidence>
<sequence length="239" mass="26640">MKFYDLMSKSAEDVGLQLSKEQYEKFIDYMKLLQEWNEKINLTAIIDDEEIIKKHFIDSIKAFKRDEFKIASSLIDVGTGAGFPGLPIAIMRADLNVTLLDSLNKRVSFLNTVINRIGASNVTTIHSRAEDGAKDIKLRENFDIATSRAVANMSVLSELCLPYVKVGGSFIALKGPSVDQEIIESTNAIKILGGKILEVCEINIEDTELKHNLVVVKKIDRSPKGYPRRAGLISKNPIK</sequence>
<feature type="chain" id="PRO_0000335335" description="Ribosomal RNA small subunit methyltransferase G">
    <location>
        <begin position="1"/>
        <end position="239"/>
    </location>
</feature>
<feature type="binding site" evidence="1">
    <location>
        <position position="78"/>
    </location>
    <ligand>
        <name>S-adenosyl-L-methionine</name>
        <dbReference type="ChEBI" id="CHEBI:59789"/>
    </ligand>
</feature>
<feature type="binding site" evidence="1">
    <location>
        <position position="83"/>
    </location>
    <ligand>
        <name>S-adenosyl-L-methionine</name>
        <dbReference type="ChEBI" id="CHEBI:59789"/>
    </ligand>
</feature>
<feature type="binding site" evidence="1">
    <location>
        <begin position="129"/>
        <end position="130"/>
    </location>
    <ligand>
        <name>S-adenosyl-L-methionine</name>
        <dbReference type="ChEBI" id="CHEBI:59789"/>
    </ligand>
</feature>
<feature type="binding site" evidence="1">
    <location>
        <position position="148"/>
    </location>
    <ligand>
        <name>S-adenosyl-L-methionine</name>
        <dbReference type="ChEBI" id="CHEBI:59789"/>
    </ligand>
</feature>
<proteinExistence type="inferred from homology"/>
<organism>
    <name type="scientific">Clostridium beijerinckii (strain ATCC 51743 / NCIMB 8052)</name>
    <name type="common">Clostridium acetobutylicum</name>
    <dbReference type="NCBI Taxonomy" id="290402"/>
    <lineage>
        <taxon>Bacteria</taxon>
        <taxon>Bacillati</taxon>
        <taxon>Bacillota</taxon>
        <taxon>Clostridia</taxon>
        <taxon>Eubacteriales</taxon>
        <taxon>Clostridiaceae</taxon>
        <taxon>Clostridium</taxon>
    </lineage>
</organism>
<accession>A6M3M3</accession>
<keyword id="KW-0963">Cytoplasm</keyword>
<keyword id="KW-0489">Methyltransferase</keyword>
<keyword id="KW-0698">rRNA processing</keyword>
<keyword id="KW-0949">S-adenosyl-L-methionine</keyword>
<keyword id="KW-0808">Transferase</keyword>
<comment type="function">
    <text evidence="1">Specifically methylates the N7 position of a guanine in 16S rRNA.</text>
</comment>
<comment type="subcellular location">
    <subcellularLocation>
        <location evidence="1">Cytoplasm</location>
    </subcellularLocation>
</comment>
<comment type="similarity">
    <text evidence="1">Belongs to the methyltransferase superfamily. RNA methyltransferase RsmG family.</text>
</comment>